<proteinExistence type="evidence at transcript level"/>
<gene>
    <name evidence="1" type="primary">qtrt2</name>
    <name evidence="1" type="synonym">qtrtd1</name>
</gene>
<keyword id="KW-0963">Cytoplasm</keyword>
<keyword id="KW-0472">Membrane</keyword>
<keyword id="KW-0479">Metal-binding</keyword>
<keyword id="KW-0496">Mitochondrion</keyword>
<keyword id="KW-1000">Mitochondrion outer membrane</keyword>
<keyword id="KW-1185">Reference proteome</keyword>
<keyword id="KW-0819">tRNA processing</keyword>
<keyword id="KW-0862">Zinc</keyword>
<organism>
    <name type="scientific">Danio rerio</name>
    <name type="common">Zebrafish</name>
    <name type="synonym">Brachydanio rerio</name>
    <dbReference type="NCBI Taxonomy" id="7955"/>
    <lineage>
        <taxon>Eukaryota</taxon>
        <taxon>Metazoa</taxon>
        <taxon>Chordata</taxon>
        <taxon>Craniata</taxon>
        <taxon>Vertebrata</taxon>
        <taxon>Euteleostomi</taxon>
        <taxon>Actinopterygii</taxon>
        <taxon>Neopterygii</taxon>
        <taxon>Teleostei</taxon>
        <taxon>Ostariophysi</taxon>
        <taxon>Cypriniformes</taxon>
        <taxon>Danionidae</taxon>
        <taxon>Danioninae</taxon>
        <taxon>Danio</taxon>
    </lineage>
</organism>
<feature type="chain" id="PRO_0000383926" description="Queuine tRNA-ribosyltransferase accessory subunit 2">
    <location>
        <begin position="1"/>
        <end position="416"/>
    </location>
</feature>
<feature type="binding site" evidence="1">
    <location>
        <position position="350"/>
    </location>
    <ligand>
        <name>Zn(2+)</name>
        <dbReference type="ChEBI" id="CHEBI:29105"/>
    </ligand>
</feature>
<feature type="binding site" evidence="1">
    <location>
        <position position="352"/>
    </location>
    <ligand>
        <name>Zn(2+)</name>
        <dbReference type="ChEBI" id="CHEBI:29105"/>
    </ligand>
</feature>
<feature type="binding site" evidence="1">
    <location>
        <position position="355"/>
    </location>
    <ligand>
        <name>Zn(2+)</name>
        <dbReference type="ChEBI" id="CHEBI:29105"/>
    </ligand>
</feature>
<feature type="binding site" evidence="1">
    <location>
        <position position="381"/>
    </location>
    <ligand>
        <name>Zn(2+)</name>
        <dbReference type="ChEBI" id="CHEBI:29105"/>
    </ligand>
</feature>
<accession>Q7ZVJ6</accession>
<comment type="function">
    <text evidence="1">Non-catalytic subunit of the queuine tRNA-ribosyltransferase (TGT) that catalyzes the base-exchange of a guanine (G) residue with queuine (Q) at position 34 (anticodon wobble position) in tRNAs with GU(N) anticodons (tRNA-Asp, -Asn, -His and -Tyr), resulting in the hypermodified nucleoside queuosine (7-(((4,5-cis-dihydroxy-2-cyclopenten-1-yl)amino)methyl)-7-deazaguanosine).</text>
</comment>
<comment type="cofactor">
    <cofactor evidence="1">
        <name>Zn(2+)</name>
        <dbReference type="ChEBI" id="CHEBI:29105"/>
    </cofactor>
    <text evidence="1">Binds 1 zinc ion per subunit.</text>
</comment>
<comment type="subunit">
    <text evidence="1">Heterodimer of a catalytic subunit qtrt1 and an accessory subunit qtrt2.</text>
</comment>
<comment type="subcellular location">
    <subcellularLocation>
        <location evidence="1">Cytoplasm</location>
    </subcellularLocation>
    <subcellularLocation>
        <location evidence="1">Mitochondrion outer membrane</location>
        <topology evidence="1">Peripheral membrane protein</topology>
        <orientation evidence="1">Cytoplasmic side</orientation>
    </subcellularLocation>
    <text evidence="1">May associate with the mitochondrion outer membrane.</text>
</comment>
<comment type="similarity">
    <text evidence="1">Belongs to the queuine tRNA-ribosyltransferase family. QTRT2 subfamily.</text>
</comment>
<comment type="sequence caution" evidence="2">
    <conflict type="erroneous initiation">
        <sequence resource="EMBL-CDS" id="AAH45519"/>
    </conflict>
</comment>
<protein>
    <recommendedName>
        <fullName evidence="1">Queuine tRNA-ribosyltransferase accessory subunit 2</fullName>
    </recommendedName>
    <alternativeName>
        <fullName evidence="1">Queuine tRNA-ribosyltransferase domain-containing protein 1</fullName>
    </alternativeName>
</protein>
<evidence type="ECO:0000255" key="1">
    <source>
        <dbReference type="HAMAP-Rule" id="MF_03043"/>
    </source>
</evidence>
<evidence type="ECO:0000305" key="2"/>
<dbReference type="EMBL" id="BC045519">
    <property type="protein sequence ID" value="AAH45519.1"/>
    <property type="status" value="ALT_INIT"/>
    <property type="molecule type" value="mRNA"/>
</dbReference>
<dbReference type="SMR" id="Q7ZVJ6"/>
<dbReference type="FunCoup" id="Q7ZVJ6">
    <property type="interactions" value="1564"/>
</dbReference>
<dbReference type="STRING" id="7955.ENSDARP00000113635"/>
<dbReference type="PaxDb" id="7955-ENSDARP00000106901"/>
<dbReference type="AGR" id="ZFIN:ZDB-GENE-060427-4"/>
<dbReference type="ZFIN" id="ZDB-GENE-060427-4">
    <property type="gene designation" value="qtrt2"/>
</dbReference>
<dbReference type="eggNOG" id="KOG3909">
    <property type="taxonomic scope" value="Eukaryota"/>
</dbReference>
<dbReference type="InParanoid" id="Q7ZVJ6"/>
<dbReference type="PhylomeDB" id="Q7ZVJ6"/>
<dbReference type="PRO" id="PR:Q7ZVJ6"/>
<dbReference type="Proteomes" id="UP000000437">
    <property type="component" value="Unplaced"/>
</dbReference>
<dbReference type="GO" id="GO:0005737">
    <property type="term" value="C:cytoplasm"/>
    <property type="evidence" value="ECO:0000250"/>
    <property type="project" value="UniProtKB"/>
</dbReference>
<dbReference type="GO" id="GO:0005741">
    <property type="term" value="C:mitochondrial outer membrane"/>
    <property type="evidence" value="ECO:0007669"/>
    <property type="project" value="UniProtKB-SubCell"/>
</dbReference>
<dbReference type="GO" id="GO:0005739">
    <property type="term" value="C:mitochondrion"/>
    <property type="evidence" value="ECO:0000250"/>
    <property type="project" value="UniProtKB"/>
</dbReference>
<dbReference type="GO" id="GO:0046872">
    <property type="term" value="F:metal ion binding"/>
    <property type="evidence" value="ECO:0007669"/>
    <property type="project" value="UniProtKB-KW"/>
</dbReference>
<dbReference type="GO" id="GO:0046982">
    <property type="term" value="F:protein heterodimerization activity"/>
    <property type="evidence" value="ECO:0000250"/>
    <property type="project" value="UniProtKB"/>
</dbReference>
<dbReference type="GO" id="GO:0042803">
    <property type="term" value="F:protein homodimerization activity"/>
    <property type="evidence" value="ECO:0000250"/>
    <property type="project" value="UniProtKB"/>
</dbReference>
<dbReference type="GO" id="GO:0000049">
    <property type="term" value="F:tRNA binding"/>
    <property type="evidence" value="ECO:0000250"/>
    <property type="project" value="UniProtKB"/>
</dbReference>
<dbReference type="GO" id="GO:0008479">
    <property type="term" value="F:tRNA-guanosine(34) queuine transglycosylase activity"/>
    <property type="evidence" value="ECO:0007669"/>
    <property type="project" value="UniProtKB-UniRule"/>
</dbReference>
<dbReference type="GO" id="GO:0101030">
    <property type="term" value="P:tRNA-guanine transglycosylation"/>
    <property type="evidence" value="ECO:0000318"/>
    <property type="project" value="GO_Central"/>
</dbReference>
<dbReference type="Gene3D" id="3.20.20.105">
    <property type="entry name" value="Queuine tRNA-ribosyltransferase-like"/>
    <property type="match status" value="1"/>
</dbReference>
<dbReference type="HAMAP" id="MF_03043">
    <property type="entry name" value="QTRT2"/>
    <property type="match status" value="1"/>
</dbReference>
<dbReference type="InterPro" id="IPR028592">
    <property type="entry name" value="QTRTD1"/>
</dbReference>
<dbReference type="InterPro" id="IPR050852">
    <property type="entry name" value="Queuine_tRNA-ribosyltrfase"/>
</dbReference>
<dbReference type="InterPro" id="IPR036511">
    <property type="entry name" value="TGT-like_sf"/>
</dbReference>
<dbReference type="InterPro" id="IPR002616">
    <property type="entry name" value="tRNA_ribo_trans-like"/>
</dbReference>
<dbReference type="NCBIfam" id="TIGR00449">
    <property type="entry name" value="tgt_general"/>
    <property type="match status" value="1"/>
</dbReference>
<dbReference type="PANTHER" id="PTHR46064">
    <property type="entry name" value="QUEUINE TRNA-RIBOSYLTRANSFERASE ACCESSORY SUBUNIT 2"/>
    <property type="match status" value="1"/>
</dbReference>
<dbReference type="PANTHER" id="PTHR46064:SF1">
    <property type="entry name" value="QUEUINE TRNA-RIBOSYLTRANSFERASE ACCESSORY SUBUNIT 2"/>
    <property type="match status" value="1"/>
</dbReference>
<dbReference type="Pfam" id="PF01702">
    <property type="entry name" value="TGT"/>
    <property type="match status" value="1"/>
</dbReference>
<dbReference type="SUPFAM" id="SSF51713">
    <property type="entry name" value="tRNA-guanine transglycosylase"/>
    <property type="match status" value="1"/>
</dbReference>
<name>QTRT2_DANRE</name>
<sequence>MKLELSRVVQGCRLGVLTGLGKSGQHSLEVPGCLLHTRCATVPHLTQDTLLTLSDLPAVTQVSVDSLAEHHEVLEEFKEGVRKFAGLHDTVIFCSLHDSASPSPAGHVTNKTVSVWGSGGRIELTAARFMSIQAAVQPDCYQSMADGETWQANTSRKRVRKAVDRTLAHLDECLVLHQKTQELKHAEIFGVVEGGDILEERLRSARETAKRPVGGFVLDGFHSSAMDQDVRAQLIQETSAELPQEKPRLVLGVGRPDEVISCVEAGVDLFESFFPFQVTERGCALSFNYTIDPDPETAGTSASTVLECNGETPEVKKPSANEDVENMTPFEINLKDKRYRDDFRPLVEGCVCYCCQKHMRAYVHHLLVTNELLAGVLLMLHNMAHYLGFFKALRDAITSDRLQDFKNTVLHRRQGD</sequence>
<reference key="1">
    <citation type="submission" date="2003-01" db="EMBL/GenBank/DDBJ databases">
        <authorList>
            <consortium name="NIH - Zebrafish Gene Collection (ZGC) project"/>
        </authorList>
    </citation>
    <scope>NUCLEOTIDE SEQUENCE [LARGE SCALE MRNA]</scope>
    <source>
        <strain>AB</strain>
    </source>
</reference>